<evidence type="ECO:0000255" key="1">
    <source>
        <dbReference type="HAMAP-Rule" id="MF_01588"/>
    </source>
</evidence>
<name>DNLJ_CAMJ8</name>
<proteinExistence type="inferred from homology"/>
<protein>
    <recommendedName>
        <fullName evidence="1">DNA ligase</fullName>
        <ecNumber evidence="1">6.5.1.2</ecNumber>
    </recommendedName>
    <alternativeName>
        <fullName evidence="1">Polydeoxyribonucleotide synthase [NAD(+)]</fullName>
    </alternativeName>
</protein>
<reference key="1">
    <citation type="journal article" date="2007" name="J. Bacteriol.">
        <title>The complete genome sequence of Campylobacter jejuni strain 81116 (NCTC11828).</title>
        <authorList>
            <person name="Pearson B.M."/>
            <person name="Gaskin D.J.H."/>
            <person name="Segers R.P.A.M."/>
            <person name="Wells J.M."/>
            <person name="Nuijten P.J.M."/>
            <person name="van Vliet A.H.M."/>
        </authorList>
    </citation>
    <scope>NUCLEOTIDE SEQUENCE [LARGE SCALE GENOMIC DNA]</scope>
    <source>
        <strain>81116 / NCTC 11828</strain>
    </source>
</reference>
<gene>
    <name evidence="1" type="primary">ligA</name>
    <name type="ordered locus">C8J_0548</name>
</gene>
<feature type="chain" id="PRO_0000340335" description="DNA ligase">
    <location>
        <begin position="1"/>
        <end position="647"/>
    </location>
</feature>
<feature type="domain" description="BRCT" evidence="1">
    <location>
        <begin position="570"/>
        <end position="647"/>
    </location>
</feature>
<feature type="active site" description="N6-AMP-lysine intermediate" evidence="1">
    <location>
        <position position="107"/>
    </location>
</feature>
<feature type="binding site" evidence="1">
    <location>
        <begin position="30"/>
        <end position="34"/>
    </location>
    <ligand>
        <name>NAD(+)</name>
        <dbReference type="ChEBI" id="CHEBI:57540"/>
    </ligand>
</feature>
<feature type="binding site" evidence="1">
    <location>
        <begin position="79"/>
        <end position="80"/>
    </location>
    <ligand>
        <name>NAD(+)</name>
        <dbReference type="ChEBI" id="CHEBI:57540"/>
    </ligand>
</feature>
<feature type="binding site" evidence="1">
    <location>
        <position position="105"/>
    </location>
    <ligand>
        <name>NAD(+)</name>
        <dbReference type="ChEBI" id="CHEBI:57540"/>
    </ligand>
</feature>
<feature type="binding site" evidence="1">
    <location>
        <position position="128"/>
    </location>
    <ligand>
        <name>NAD(+)</name>
        <dbReference type="ChEBI" id="CHEBI:57540"/>
    </ligand>
</feature>
<feature type="binding site" evidence="1">
    <location>
        <position position="162"/>
    </location>
    <ligand>
        <name>NAD(+)</name>
        <dbReference type="ChEBI" id="CHEBI:57540"/>
    </ligand>
</feature>
<feature type="binding site" evidence="1">
    <location>
        <position position="301"/>
    </location>
    <ligand>
        <name>NAD(+)</name>
        <dbReference type="ChEBI" id="CHEBI:57540"/>
    </ligand>
</feature>
<feature type="binding site" evidence="1">
    <location>
        <position position="395"/>
    </location>
    <ligand>
        <name>Zn(2+)</name>
        <dbReference type="ChEBI" id="CHEBI:29105"/>
    </ligand>
</feature>
<feature type="binding site" evidence="1">
    <location>
        <position position="398"/>
    </location>
    <ligand>
        <name>Zn(2+)</name>
        <dbReference type="ChEBI" id="CHEBI:29105"/>
    </ligand>
</feature>
<feature type="binding site" evidence="1">
    <location>
        <position position="411"/>
    </location>
    <ligand>
        <name>Zn(2+)</name>
        <dbReference type="ChEBI" id="CHEBI:29105"/>
    </ligand>
</feature>
<feature type="binding site" evidence="1">
    <location>
        <position position="416"/>
    </location>
    <ligand>
        <name>Zn(2+)</name>
        <dbReference type="ChEBI" id="CHEBI:29105"/>
    </ligand>
</feature>
<accession>A8FL10</accession>
<keyword id="KW-0227">DNA damage</keyword>
<keyword id="KW-0234">DNA repair</keyword>
<keyword id="KW-0235">DNA replication</keyword>
<keyword id="KW-0436">Ligase</keyword>
<keyword id="KW-0460">Magnesium</keyword>
<keyword id="KW-0464">Manganese</keyword>
<keyword id="KW-0479">Metal-binding</keyword>
<keyword id="KW-0520">NAD</keyword>
<keyword id="KW-0862">Zinc</keyword>
<dbReference type="EC" id="6.5.1.2" evidence="1"/>
<dbReference type="EMBL" id="CP000814">
    <property type="protein sequence ID" value="ABV52147.1"/>
    <property type="molecule type" value="Genomic_DNA"/>
</dbReference>
<dbReference type="RefSeq" id="WP_002866459.1">
    <property type="nucleotide sequence ID" value="NC_009839.1"/>
</dbReference>
<dbReference type="SMR" id="A8FL10"/>
<dbReference type="KEGG" id="cju:C8J_0548"/>
<dbReference type="HOGENOM" id="CLU_007764_2_1_7"/>
<dbReference type="GO" id="GO:0005829">
    <property type="term" value="C:cytosol"/>
    <property type="evidence" value="ECO:0007669"/>
    <property type="project" value="TreeGrafter"/>
</dbReference>
<dbReference type="GO" id="GO:0003911">
    <property type="term" value="F:DNA ligase (NAD+) activity"/>
    <property type="evidence" value="ECO:0007669"/>
    <property type="project" value="UniProtKB-UniRule"/>
</dbReference>
<dbReference type="GO" id="GO:0046872">
    <property type="term" value="F:metal ion binding"/>
    <property type="evidence" value="ECO:0007669"/>
    <property type="project" value="UniProtKB-KW"/>
</dbReference>
<dbReference type="GO" id="GO:0006281">
    <property type="term" value="P:DNA repair"/>
    <property type="evidence" value="ECO:0007669"/>
    <property type="project" value="UniProtKB-KW"/>
</dbReference>
<dbReference type="GO" id="GO:0006260">
    <property type="term" value="P:DNA replication"/>
    <property type="evidence" value="ECO:0007669"/>
    <property type="project" value="UniProtKB-KW"/>
</dbReference>
<dbReference type="CDD" id="cd17748">
    <property type="entry name" value="BRCT_DNA_ligase_like"/>
    <property type="match status" value="1"/>
</dbReference>
<dbReference type="CDD" id="cd00114">
    <property type="entry name" value="LIGANc"/>
    <property type="match status" value="1"/>
</dbReference>
<dbReference type="FunFam" id="2.40.50.140:FF:000012">
    <property type="entry name" value="DNA ligase"/>
    <property type="match status" value="1"/>
</dbReference>
<dbReference type="Gene3D" id="1.10.150.20">
    <property type="entry name" value="5' to 3' exonuclease, C-terminal subdomain"/>
    <property type="match status" value="2"/>
</dbReference>
<dbReference type="Gene3D" id="3.40.50.10190">
    <property type="entry name" value="BRCT domain"/>
    <property type="match status" value="1"/>
</dbReference>
<dbReference type="Gene3D" id="3.30.470.30">
    <property type="entry name" value="DNA ligase/mRNA capping enzyme"/>
    <property type="match status" value="1"/>
</dbReference>
<dbReference type="Gene3D" id="1.10.287.610">
    <property type="entry name" value="Helix hairpin bin"/>
    <property type="match status" value="1"/>
</dbReference>
<dbReference type="Gene3D" id="2.40.50.140">
    <property type="entry name" value="Nucleic acid-binding proteins"/>
    <property type="match status" value="1"/>
</dbReference>
<dbReference type="HAMAP" id="MF_01588">
    <property type="entry name" value="DNA_ligase_A"/>
    <property type="match status" value="1"/>
</dbReference>
<dbReference type="InterPro" id="IPR001357">
    <property type="entry name" value="BRCT_dom"/>
</dbReference>
<dbReference type="InterPro" id="IPR036420">
    <property type="entry name" value="BRCT_dom_sf"/>
</dbReference>
<dbReference type="InterPro" id="IPR041663">
    <property type="entry name" value="DisA/LigA_HHH"/>
</dbReference>
<dbReference type="InterPro" id="IPR001679">
    <property type="entry name" value="DNA_ligase"/>
</dbReference>
<dbReference type="InterPro" id="IPR018239">
    <property type="entry name" value="DNA_ligase_AS"/>
</dbReference>
<dbReference type="InterPro" id="IPR033136">
    <property type="entry name" value="DNA_ligase_CS"/>
</dbReference>
<dbReference type="InterPro" id="IPR013839">
    <property type="entry name" value="DNAligase_adenylation"/>
</dbReference>
<dbReference type="InterPro" id="IPR013840">
    <property type="entry name" value="DNAligase_N"/>
</dbReference>
<dbReference type="InterPro" id="IPR012340">
    <property type="entry name" value="NA-bd_OB-fold"/>
</dbReference>
<dbReference type="InterPro" id="IPR004150">
    <property type="entry name" value="NAD_DNA_ligase_OB"/>
</dbReference>
<dbReference type="InterPro" id="IPR010994">
    <property type="entry name" value="RuvA_2-like"/>
</dbReference>
<dbReference type="NCBIfam" id="TIGR00575">
    <property type="entry name" value="dnlj"/>
    <property type="match status" value="1"/>
</dbReference>
<dbReference type="NCBIfam" id="NF005932">
    <property type="entry name" value="PRK07956.1"/>
    <property type="match status" value="1"/>
</dbReference>
<dbReference type="PANTHER" id="PTHR23389">
    <property type="entry name" value="CHROMOSOME TRANSMISSION FIDELITY FACTOR 18"/>
    <property type="match status" value="1"/>
</dbReference>
<dbReference type="PANTHER" id="PTHR23389:SF9">
    <property type="entry name" value="DNA LIGASE"/>
    <property type="match status" value="1"/>
</dbReference>
<dbReference type="Pfam" id="PF00533">
    <property type="entry name" value="BRCT"/>
    <property type="match status" value="1"/>
</dbReference>
<dbReference type="Pfam" id="PF01653">
    <property type="entry name" value="DNA_ligase_aden"/>
    <property type="match status" value="1"/>
</dbReference>
<dbReference type="Pfam" id="PF03120">
    <property type="entry name" value="DNA_ligase_OB"/>
    <property type="match status" value="1"/>
</dbReference>
<dbReference type="Pfam" id="PF12826">
    <property type="entry name" value="HHH_2"/>
    <property type="match status" value="1"/>
</dbReference>
<dbReference type="PIRSF" id="PIRSF001604">
    <property type="entry name" value="LigA"/>
    <property type="match status" value="1"/>
</dbReference>
<dbReference type="SMART" id="SM00292">
    <property type="entry name" value="BRCT"/>
    <property type="match status" value="1"/>
</dbReference>
<dbReference type="SMART" id="SM00532">
    <property type="entry name" value="LIGANc"/>
    <property type="match status" value="1"/>
</dbReference>
<dbReference type="SUPFAM" id="SSF52113">
    <property type="entry name" value="BRCT domain"/>
    <property type="match status" value="1"/>
</dbReference>
<dbReference type="SUPFAM" id="SSF56091">
    <property type="entry name" value="DNA ligase/mRNA capping enzyme, catalytic domain"/>
    <property type="match status" value="1"/>
</dbReference>
<dbReference type="SUPFAM" id="SSF50249">
    <property type="entry name" value="Nucleic acid-binding proteins"/>
    <property type="match status" value="1"/>
</dbReference>
<dbReference type="SUPFAM" id="SSF47781">
    <property type="entry name" value="RuvA domain 2-like"/>
    <property type="match status" value="1"/>
</dbReference>
<dbReference type="PROSITE" id="PS50172">
    <property type="entry name" value="BRCT"/>
    <property type="match status" value="1"/>
</dbReference>
<dbReference type="PROSITE" id="PS01055">
    <property type="entry name" value="DNA_LIGASE_N1"/>
    <property type="match status" value="1"/>
</dbReference>
<dbReference type="PROSITE" id="PS01056">
    <property type="entry name" value="DNA_LIGASE_N2"/>
    <property type="match status" value="1"/>
</dbReference>
<organism>
    <name type="scientific">Campylobacter jejuni subsp. jejuni serotype O:6 (strain 81116 / NCTC 11828)</name>
    <dbReference type="NCBI Taxonomy" id="407148"/>
    <lineage>
        <taxon>Bacteria</taxon>
        <taxon>Pseudomonadati</taxon>
        <taxon>Campylobacterota</taxon>
        <taxon>Epsilonproteobacteria</taxon>
        <taxon>Campylobacterales</taxon>
        <taxon>Campylobacteraceae</taxon>
        <taxon>Campylobacter</taxon>
    </lineage>
</organism>
<comment type="function">
    <text evidence="1">DNA ligase that catalyzes the formation of phosphodiester linkages between 5'-phosphoryl and 3'-hydroxyl groups in double-stranded DNA using NAD as a coenzyme and as the energy source for the reaction. It is essential for DNA replication and repair of damaged DNA.</text>
</comment>
<comment type="catalytic activity">
    <reaction evidence="1">
        <text>NAD(+) + (deoxyribonucleotide)n-3'-hydroxyl + 5'-phospho-(deoxyribonucleotide)m = (deoxyribonucleotide)n+m + AMP + beta-nicotinamide D-nucleotide.</text>
        <dbReference type="EC" id="6.5.1.2"/>
    </reaction>
</comment>
<comment type="cofactor">
    <cofactor evidence="1">
        <name>Mg(2+)</name>
        <dbReference type="ChEBI" id="CHEBI:18420"/>
    </cofactor>
    <cofactor evidence="1">
        <name>Mn(2+)</name>
        <dbReference type="ChEBI" id="CHEBI:29035"/>
    </cofactor>
</comment>
<comment type="similarity">
    <text evidence="1">Belongs to the NAD-dependent DNA ligase family. LigA subfamily.</text>
</comment>
<sequence length="647" mass="74005">MKKEEYLEKVALANLWMRAYYEKDEPLASDEEYDALIRELRAFEEQNKDEISKDSPTQKIAPTIQSEFKKIAHLKRMWSMEDVFDESEFRAWAKRAKCEKNFFIEPKFDGASLNLLYENGKLVSGATRGDGEVGEDITLNVFEIENIPKNIAYKERIEIRGEVVILKDDFEKINEKRALLNQSLFANPRNAASGSLRQLDTSITKERNLKFYPWGLGENTLNFTKHSEVMQFIRELGFLKDDFVRLCVNLDEVLKAYDELLALREKKPMMMDGMVVRIDDLALCEELGYTVKFPKFMAAFKFPALEKTTRLIGVNLQVGRSGVITPVAVLEPVNLDGVVVKSATLHNFDEIARLDVKINDFVSVIRSGDVIPKITKVFKERREGLEMEISRPKLCPTCQSELLDEGTLIKCQNIDCEDRLVNSIIHFVSKKCLNIDGLGENIVELLYKHKKITTLESIFHLKFNDFEGLEGFKEKKINNLLNAIEQARECELFRFITALGIEHIGEVAAKKLSLSFGKEWHKQSFEAYANLEGFGEQMALSLCEFTRVNRTRIDEFYKLLNLKIEKLEIKSDGVIFGKTFVITGTLSRSRDEFKALIEKLGGKVSGSVSKKTDYVLFGEEAGSKLIKAKELEIKCIDESAFNELVKE</sequence>